<reference key="1">
    <citation type="journal article" date="2005" name="Science">
        <title>The genome of the basidiomycetous yeast and human pathogen Cryptococcus neoformans.</title>
        <authorList>
            <person name="Loftus B.J."/>
            <person name="Fung E."/>
            <person name="Roncaglia P."/>
            <person name="Rowley D."/>
            <person name="Amedeo P."/>
            <person name="Bruno D."/>
            <person name="Vamathevan J."/>
            <person name="Miranda M."/>
            <person name="Anderson I.J."/>
            <person name="Fraser J.A."/>
            <person name="Allen J.E."/>
            <person name="Bosdet I.E."/>
            <person name="Brent M.R."/>
            <person name="Chiu R."/>
            <person name="Doering T.L."/>
            <person name="Donlin M.J."/>
            <person name="D'Souza C.A."/>
            <person name="Fox D.S."/>
            <person name="Grinberg V."/>
            <person name="Fu J."/>
            <person name="Fukushima M."/>
            <person name="Haas B.J."/>
            <person name="Huang J.C."/>
            <person name="Janbon G."/>
            <person name="Jones S.J.M."/>
            <person name="Koo H.L."/>
            <person name="Krzywinski M.I."/>
            <person name="Kwon-Chung K.J."/>
            <person name="Lengeler K.B."/>
            <person name="Maiti R."/>
            <person name="Marra M.A."/>
            <person name="Marra R.E."/>
            <person name="Mathewson C.A."/>
            <person name="Mitchell T.G."/>
            <person name="Pertea M."/>
            <person name="Riggs F.R."/>
            <person name="Salzberg S.L."/>
            <person name="Schein J.E."/>
            <person name="Shvartsbeyn A."/>
            <person name="Shin H."/>
            <person name="Shumway M."/>
            <person name="Specht C.A."/>
            <person name="Suh B.B."/>
            <person name="Tenney A."/>
            <person name="Utterback T.R."/>
            <person name="Wickes B.L."/>
            <person name="Wortman J.R."/>
            <person name="Wye N.H."/>
            <person name="Kronstad J.W."/>
            <person name="Lodge J.K."/>
            <person name="Heitman J."/>
            <person name="Davis R.W."/>
            <person name="Fraser C.M."/>
            <person name="Hyman R.W."/>
        </authorList>
    </citation>
    <scope>NUCLEOTIDE SEQUENCE [LARGE SCALE GENOMIC DNA]</scope>
    <source>
        <strain>JEC21 / ATCC MYA-565</strain>
    </source>
</reference>
<sequence>MSTSLETPSGASAGPSIVASGLPPLADLVRAGSKRTRVVYGAETSAVEDDGLARANKIKLATKLAIEYKDVQTLPPILQAQQTGPAGPKRPTQPSIAASATAGPNVKLIGGPEAEKASSSTPQAVAEPRSLVKFRHQEGFAAEGGQATSRLSQALMRKKEAREVKPEYHPEWKLTRVISGHMGWVRAVAMDPGNQWFATGAGDRVIKIWDLASGELKLSLTGHISTIRGLAVSDRHPYLFSCAEDKMVKCWDLETNKVIRHYHGHFSGVYSLSVHPTLDVLVTGGRDASVRVWDMRTRANIFTLTGHTSTVGDVKTQDSDPQIISGSMDSTVRLWDLAAGKCMNTLTHHKKSVRALAIHPTEYSFASASSGGNNIKKWKCPEGIFVNNFVGHEAIINTLSINSENVLFSGADNGTLTLWDYKTGLPFQHLKDIPQPGSLDAEAGVFCSTFDKTGTRLITGGADKTIKVYSEQA</sequence>
<comment type="function">
    <text evidence="1">Involved in pre-mRNA splicing and required for cell cycle progression at G2/M.</text>
</comment>
<comment type="subunit">
    <text evidence="1">Associated with the spliceosome.</text>
</comment>
<comment type="subcellular location">
    <subcellularLocation>
        <location evidence="1">Cytoplasm</location>
    </subcellularLocation>
    <subcellularLocation>
        <location evidence="1">Nucleus</location>
    </subcellularLocation>
</comment>
<comment type="similarity">
    <text evidence="3">Belongs to the WD repeat PRL1/PRL2 family.</text>
</comment>
<protein>
    <recommendedName>
        <fullName>Pre-mRNA-splicing factor PRP46</fullName>
    </recommendedName>
    <alternativeName>
        <fullName>Pre-mRNA-processing protein 46</fullName>
    </alternativeName>
</protein>
<gene>
    <name type="primary">PRP46</name>
    <name type="ordered locus">CNG03060</name>
</gene>
<proteinExistence type="inferred from homology"/>
<accession>P0CS48</accession>
<accession>Q55PP3</accession>
<accession>Q5KDR4</accession>
<dbReference type="EMBL" id="AE017347">
    <property type="protein sequence ID" value="AAW44697.1"/>
    <property type="molecule type" value="Genomic_DNA"/>
</dbReference>
<dbReference type="RefSeq" id="XP_572004.1">
    <property type="nucleotide sequence ID" value="XM_572004.1"/>
</dbReference>
<dbReference type="SMR" id="P0CS48"/>
<dbReference type="FunCoup" id="P0CS48">
    <property type="interactions" value="513"/>
</dbReference>
<dbReference type="STRING" id="214684.P0CS48"/>
<dbReference type="PaxDb" id="214684-P0CS48"/>
<dbReference type="EnsemblFungi" id="AAW44697">
    <property type="protein sequence ID" value="AAW44697"/>
    <property type="gene ID" value="CNG03060"/>
</dbReference>
<dbReference type="GeneID" id="3258829"/>
<dbReference type="KEGG" id="cne:CNG03060"/>
<dbReference type="VEuPathDB" id="FungiDB:CNG03060"/>
<dbReference type="eggNOG" id="KOG0285">
    <property type="taxonomic scope" value="Eukaryota"/>
</dbReference>
<dbReference type="HOGENOM" id="CLU_000288_72_2_1"/>
<dbReference type="InParanoid" id="P0CS48"/>
<dbReference type="OMA" id="FAMCFDQ"/>
<dbReference type="OrthoDB" id="10256122at2759"/>
<dbReference type="Proteomes" id="UP000002149">
    <property type="component" value="Chromosome 7"/>
</dbReference>
<dbReference type="GO" id="GO:0071013">
    <property type="term" value="C:catalytic step 2 spliceosome"/>
    <property type="evidence" value="ECO:0000318"/>
    <property type="project" value="GO_Central"/>
</dbReference>
<dbReference type="GO" id="GO:0005737">
    <property type="term" value="C:cytoplasm"/>
    <property type="evidence" value="ECO:0007669"/>
    <property type="project" value="UniProtKB-SubCell"/>
</dbReference>
<dbReference type="GO" id="GO:0000974">
    <property type="term" value="C:Prp19 complex"/>
    <property type="evidence" value="ECO:0000318"/>
    <property type="project" value="GO_Central"/>
</dbReference>
<dbReference type="GO" id="GO:0000398">
    <property type="term" value="P:mRNA splicing, via spliceosome"/>
    <property type="evidence" value="ECO:0000318"/>
    <property type="project" value="GO_Central"/>
</dbReference>
<dbReference type="CDD" id="cd00200">
    <property type="entry name" value="WD40"/>
    <property type="match status" value="1"/>
</dbReference>
<dbReference type="FunFam" id="2.130.10.10:FF:000012">
    <property type="entry name" value="Putative pleiotropic regulator 1"/>
    <property type="match status" value="1"/>
</dbReference>
<dbReference type="Gene3D" id="2.130.10.10">
    <property type="entry name" value="YVTN repeat-like/Quinoprotein amine dehydrogenase"/>
    <property type="match status" value="1"/>
</dbReference>
<dbReference type="InterPro" id="IPR020472">
    <property type="entry name" value="G-protein_beta_WD-40_rep"/>
</dbReference>
<dbReference type="InterPro" id="IPR045241">
    <property type="entry name" value="Prp46/PLRG1-like"/>
</dbReference>
<dbReference type="InterPro" id="IPR015943">
    <property type="entry name" value="WD40/YVTN_repeat-like_dom_sf"/>
</dbReference>
<dbReference type="InterPro" id="IPR019775">
    <property type="entry name" value="WD40_repeat_CS"/>
</dbReference>
<dbReference type="InterPro" id="IPR036322">
    <property type="entry name" value="WD40_repeat_dom_sf"/>
</dbReference>
<dbReference type="InterPro" id="IPR001680">
    <property type="entry name" value="WD40_rpt"/>
</dbReference>
<dbReference type="PANTHER" id="PTHR19923:SF0">
    <property type="entry name" value="PLEIOTROPIC REGULATOR 1"/>
    <property type="match status" value="1"/>
</dbReference>
<dbReference type="PANTHER" id="PTHR19923">
    <property type="entry name" value="WD40 REPEAT PROTEINPRL1/PRL2-RELATED"/>
    <property type="match status" value="1"/>
</dbReference>
<dbReference type="Pfam" id="PF00400">
    <property type="entry name" value="WD40"/>
    <property type="match status" value="7"/>
</dbReference>
<dbReference type="PRINTS" id="PR00320">
    <property type="entry name" value="GPROTEINBRPT"/>
</dbReference>
<dbReference type="SMART" id="SM00320">
    <property type="entry name" value="WD40"/>
    <property type="match status" value="7"/>
</dbReference>
<dbReference type="SUPFAM" id="SSF50978">
    <property type="entry name" value="WD40 repeat-like"/>
    <property type="match status" value="1"/>
</dbReference>
<dbReference type="PROSITE" id="PS00678">
    <property type="entry name" value="WD_REPEATS_1"/>
    <property type="match status" value="2"/>
</dbReference>
<dbReference type="PROSITE" id="PS50082">
    <property type="entry name" value="WD_REPEATS_2"/>
    <property type="match status" value="5"/>
</dbReference>
<dbReference type="PROSITE" id="PS50294">
    <property type="entry name" value="WD_REPEATS_REGION"/>
    <property type="match status" value="1"/>
</dbReference>
<evidence type="ECO:0000250" key="1"/>
<evidence type="ECO:0000256" key="2">
    <source>
        <dbReference type="SAM" id="MobiDB-lite"/>
    </source>
</evidence>
<evidence type="ECO:0000305" key="3"/>
<feature type="chain" id="PRO_0000051163" description="Pre-mRNA-splicing factor PRP46">
    <location>
        <begin position="1"/>
        <end position="473"/>
    </location>
</feature>
<feature type="repeat" description="WD 1">
    <location>
        <begin position="180"/>
        <end position="219"/>
    </location>
</feature>
<feature type="repeat" description="WD 2">
    <location>
        <begin position="222"/>
        <end position="261"/>
    </location>
</feature>
<feature type="repeat" description="WD 3">
    <location>
        <begin position="264"/>
        <end position="303"/>
    </location>
</feature>
<feature type="repeat" description="WD 4">
    <location>
        <begin position="306"/>
        <end position="347"/>
    </location>
</feature>
<feature type="repeat" description="WD 5">
    <location>
        <begin position="349"/>
        <end position="388"/>
    </location>
</feature>
<feature type="repeat" description="WD 6">
    <location>
        <begin position="391"/>
        <end position="429"/>
    </location>
</feature>
<feature type="repeat" description="WD 7">
    <location>
        <begin position="440"/>
        <end position="473"/>
    </location>
</feature>
<feature type="region of interest" description="Disordered" evidence="2">
    <location>
        <begin position="1"/>
        <end position="21"/>
    </location>
</feature>
<feature type="region of interest" description="Disordered" evidence="2">
    <location>
        <begin position="103"/>
        <end position="126"/>
    </location>
</feature>
<feature type="compositionally biased region" description="Polar residues" evidence="2">
    <location>
        <begin position="1"/>
        <end position="10"/>
    </location>
</feature>
<name>PRP46_CRYNJ</name>
<organism>
    <name type="scientific">Cryptococcus neoformans var. neoformans serotype D (strain JEC21 / ATCC MYA-565)</name>
    <name type="common">Filobasidiella neoformans</name>
    <dbReference type="NCBI Taxonomy" id="214684"/>
    <lineage>
        <taxon>Eukaryota</taxon>
        <taxon>Fungi</taxon>
        <taxon>Dikarya</taxon>
        <taxon>Basidiomycota</taxon>
        <taxon>Agaricomycotina</taxon>
        <taxon>Tremellomycetes</taxon>
        <taxon>Tremellales</taxon>
        <taxon>Cryptococcaceae</taxon>
        <taxon>Cryptococcus</taxon>
        <taxon>Cryptococcus neoformans species complex</taxon>
    </lineage>
</organism>
<keyword id="KW-0963">Cytoplasm</keyword>
<keyword id="KW-0507">mRNA processing</keyword>
<keyword id="KW-0508">mRNA splicing</keyword>
<keyword id="KW-0539">Nucleus</keyword>
<keyword id="KW-1185">Reference proteome</keyword>
<keyword id="KW-0677">Repeat</keyword>
<keyword id="KW-0747">Spliceosome</keyword>
<keyword id="KW-0853">WD repeat</keyword>